<feature type="chain" id="PRO_0000056166" description="E3 ubiquitin-protein ligase SIAH1">
    <location>
        <begin position="1"/>
        <end position="282"/>
    </location>
</feature>
<feature type="zinc finger region" description="RING-type" evidence="4">
    <location>
        <begin position="41"/>
        <end position="76"/>
    </location>
</feature>
<feature type="zinc finger region" description="SIAH-type" evidence="5">
    <location>
        <begin position="93"/>
        <end position="153"/>
    </location>
</feature>
<feature type="region of interest" description="Disordered" evidence="6">
    <location>
        <begin position="1"/>
        <end position="22"/>
    </location>
</feature>
<feature type="region of interest" description="SBD" evidence="2">
    <location>
        <begin position="90"/>
        <end position="282"/>
    </location>
</feature>
<feature type="compositionally biased region" description="Polar residues" evidence="6">
    <location>
        <begin position="1"/>
        <end position="17"/>
    </location>
</feature>
<feature type="binding site" evidence="3">
    <location>
        <position position="98"/>
    </location>
    <ligand>
        <name>Zn(2+)</name>
        <dbReference type="ChEBI" id="CHEBI:29105"/>
        <label>1</label>
    </ligand>
</feature>
<feature type="binding site" evidence="3">
    <location>
        <position position="105"/>
    </location>
    <ligand>
        <name>Zn(2+)</name>
        <dbReference type="ChEBI" id="CHEBI:29105"/>
        <label>1</label>
    </ligand>
</feature>
<feature type="binding site" evidence="3">
    <location>
        <position position="117"/>
    </location>
    <ligand>
        <name>Zn(2+)</name>
        <dbReference type="ChEBI" id="CHEBI:29105"/>
        <label>1</label>
    </ligand>
</feature>
<feature type="binding site" evidence="3">
    <location>
        <position position="121"/>
    </location>
    <ligand>
        <name>Zn(2+)</name>
        <dbReference type="ChEBI" id="CHEBI:29105"/>
        <label>1</label>
    </ligand>
</feature>
<feature type="binding site" evidence="3">
    <location>
        <position position="128"/>
    </location>
    <ligand>
        <name>Zn(2+)</name>
        <dbReference type="ChEBI" id="CHEBI:29105"/>
        <label>2</label>
    </ligand>
</feature>
<feature type="binding site" evidence="3">
    <location>
        <position position="135"/>
    </location>
    <ligand>
        <name>Zn(2+)</name>
        <dbReference type="ChEBI" id="CHEBI:29105"/>
        <label>2</label>
    </ligand>
</feature>
<feature type="binding site" evidence="3">
    <location>
        <position position="147"/>
    </location>
    <ligand>
        <name>Zn(2+)</name>
        <dbReference type="ChEBI" id="CHEBI:29105"/>
        <label>2</label>
    </ligand>
</feature>
<feature type="binding site" evidence="3">
    <location>
        <position position="152"/>
    </location>
    <ligand>
        <name>Zn(2+)</name>
        <dbReference type="ChEBI" id="CHEBI:29105"/>
        <label>2</label>
    </ligand>
</feature>
<feature type="modified residue" description="Phosphoserine; by ATM and ATR" evidence="3">
    <location>
        <position position="19"/>
    </location>
</feature>
<sequence>MSRQTATALPTGTSKCPPSQRVPALTGTTASNNDLASLFECPVCFDYVLPPILQCQSGHLVCSNCRPKLTCCPTCRGPLGSIRNLAMEKVANSVLFPCKYASSGCEITLPHTEKAEHEELCEFRPYSCPCPGASCKWQGSLDAVMPHLMHQHKSITTLQGEDIVFLATDINLPGAVDWVMMQSCFGFHFMLVLEKQEKYDGHQQFFAIVQLIGTRKQAENFAYRLELNGHRRRLTWEATPRSIHEGIATAIMNSDCLVFDTSIAQLFAENGNLGINVTISMC</sequence>
<proteinExistence type="evidence at protein level"/>
<reference key="1">
    <citation type="journal article" date="2002" name="J. Biol. Chem.">
        <title>Regulation of synaptophysin degradation by mammalian homologues of Seven in Absentia.</title>
        <authorList>
            <person name="Wheeler T.C."/>
            <person name="Chin L.-S."/>
            <person name="Li Y."/>
            <person name="Roudabush F.L."/>
            <person name="Li L."/>
        </authorList>
    </citation>
    <scope>NUCLEOTIDE SEQUENCE [MRNA]</scope>
    <scope>FUNCTION IN DEGRADATION OF SYP</scope>
    <scope>CATALYTIC ACTIVITY</scope>
    <scope>PATHWAY</scope>
    <scope>SUBCELLULAR LOCATION</scope>
    <scope>INTERACTION WITH UBE2E2</scope>
    <source>
        <strain>Sprague-Dawley</strain>
    </source>
</reference>
<reference key="2">
    <citation type="submission" date="2001-08" db="EMBL/GenBank/DDBJ databases">
        <title>Rat Siah1A.</title>
        <authorList>
            <person name="Yamaguchi A."/>
            <person name="Hori O."/>
            <person name="Tohyama M."/>
        </authorList>
    </citation>
    <scope>NUCLEOTIDE SEQUENCE [MRNA]</scope>
</reference>
<reference key="3">
    <citation type="journal article" date="1999" name="Genes Cells">
        <title>Competitive interaction of seven in absentia homolog-1A and Ca2+/calmodulin with the cytoplasmic tail of group 1 metabotropic glutamate receptors.</title>
        <authorList>
            <person name="Ishikawa K."/>
            <person name="Nash S.R."/>
            <person name="Nishimune A."/>
            <person name="Neki A."/>
            <person name="Kaneko S."/>
            <person name="Nakanishi S."/>
        </authorList>
    </citation>
    <scope>INTERACTION WITH GRM1 AND GRM5</scope>
</reference>
<reference key="4">
    <citation type="journal article" date="2004" name="Proc. Natl. Acad. Sci. U.S.A.">
        <title>Ubiquitylation of synphilin-1 and alpha-synuclein by SIAH and its presence in cellular inclusions and Lewy bodies imply a role in Parkinson's disease.</title>
        <authorList>
            <person name="Liani E."/>
            <person name="Eyal A."/>
            <person name="Avraham E."/>
            <person name="Shemer R."/>
            <person name="Szargel R."/>
            <person name="Berg D."/>
            <person name="Bornemann A."/>
            <person name="Riess O."/>
            <person name="Ross C.A."/>
            <person name="Rott R."/>
            <person name="Engelender S."/>
        </authorList>
    </citation>
    <scope>INTERACTION WITH SNCAIP</scope>
</reference>
<reference key="5">
    <citation type="journal article" date="2005" name="Nat. Cell Biol.">
        <title>S-nitrosylated GAPDH initiates apoptotic cell death by nuclear translocation following Siah1 binding.</title>
        <authorList>
            <person name="Hara M.R."/>
            <person name="Agrawal N."/>
            <person name="Kim S.F."/>
            <person name="Cascio M.B."/>
            <person name="Fujimuro M."/>
            <person name="Ozeki Y."/>
            <person name="Takahashi M."/>
            <person name="Cheah J.H."/>
            <person name="Tankou S.K."/>
            <person name="Hester L.D."/>
            <person name="Ferris C.D."/>
            <person name="Hayward S.D."/>
            <person name="Snyder S.H."/>
            <person name="Sawa A."/>
        </authorList>
    </citation>
    <scope>FUNCTION</scope>
    <scope>CATALYTIC ACTIVITY</scope>
    <scope>PATHWAY</scope>
    <scope>SUBCELLULAR LOCATION</scope>
    <scope>INTERACTION WITH GAPDH</scope>
</reference>
<reference key="6">
    <citation type="journal article" date="2009" name="J. Biol. Chem.">
        <title>Synphilin-1A inhibits seven in absentia homolog (SIAH) and modulates alpha-synuclein monoubiquitylation and inclusion formation.</title>
        <authorList>
            <person name="Szargel R."/>
            <person name="Rott R."/>
            <person name="Eyal A."/>
            <person name="Haskin J."/>
            <person name="Shani V."/>
            <person name="Balan L."/>
            <person name="Wolosker H."/>
            <person name="Engelender S."/>
        </authorList>
    </citation>
    <scope>INTERACTION WITH SNCAIP</scope>
    <scope>SUBCELLULAR LOCATION</scope>
</reference>
<reference key="7">
    <citation type="journal article" date="2013" name="EMBO J.">
        <title>Bassoon and Piccolo maintain synapse integrity by regulating protein ubiquitination and degradation.</title>
        <authorList>
            <person name="Waites C.L."/>
            <person name="Leal-Ortiz S.A."/>
            <person name="Okerlund N."/>
            <person name="Dalke H."/>
            <person name="Fejtova A."/>
            <person name="Altrock W.D."/>
            <person name="Gundelfinger E.D."/>
            <person name="Garner C.C."/>
        </authorList>
    </citation>
    <scope>INTERACTION WITH BSN AND PCLO</scope>
</reference>
<organism>
    <name type="scientific">Rattus norvegicus</name>
    <name type="common">Rat</name>
    <dbReference type="NCBI Taxonomy" id="10116"/>
    <lineage>
        <taxon>Eukaryota</taxon>
        <taxon>Metazoa</taxon>
        <taxon>Chordata</taxon>
        <taxon>Craniata</taxon>
        <taxon>Vertebrata</taxon>
        <taxon>Euteleostomi</taxon>
        <taxon>Mammalia</taxon>
        <taxon>Eutheria</taxon>
        <taxon>Euarchontoglires</taxon>
        <taxon>Glires</taxon>
        <taxon>Rodentia</taxon>
        <taxon>Myomorpha</taxon>
        <taxon>Muroidea</taxon>
        <taxon>Muridae</taxon>
        <taxon>Murinae</taxon>
        <taxon>Rattus</taxon>
    </lineage>
</organism>
<evidence type="ECO:0000250" key="1"/>
<evidence type="ECO:0000250" key="2">
    <source>
        <dbReference type="UniProtKB" id="P61092"/>
    </source>
</evidence>
<evidence type="ECO:0000250" key="3">
    <source>
        <dbReference type="UniProtKB" id="Q8IUQ4"/>
    </source>
</evidence>
<evidence type="ECO:0000255" key="4">
    <source>
        <dbReference type="PROSITE-ProRule" id="PRU00175"/>
    </source>
</evidence>
<evidence type="ECO:0000255" key="5">
    <source>
        <dbReference type="PROSITE-ProRule" id="PRU00455"/>
    </source>
</evidence>
<evidence type="ECO:0000256" key="6">
    <source>
        <dbReference type="SAM" id="MobiDB-lite"/>
    </source>
</evidence>
<evidence type="ECO:0000269" key="7">
    <source>
    </source>
</evidence>
<evidence type="ECO:0000269" key="8">
    <source>
    </source>
</evidence>
<evidence type="ECO:0000269" key="9">
    <source>
    </source>
</evidence>
<evidence type="ECO:0000269" key="10">
    <source>
    </source>
</evidence>
<evidence type="ECO:0000269" key="11">
    <source>
    </source>
</evidence>
<evidence type="ECO:0000269" key="12">
    <source>
    </source>
</evidence>
<evidence type="ECO:0000305" key="13"/>
<gene>
    <name type="primary">Siah1</name>
    <name type="synonym">Siah1a</name>
</gene>
<dbReference type="EC" id="2.3.2.27" evidence="8 10"/>
<dbReference type="EMBL" id="AF389476">
    <property type="protein sequence ID" value="AAL91362.1"/>
    <property type="molecule type" value="mRNA"/>
</dbReference>
<dbReference type="EMBL" id="AB067814">
    <property type="protein sequence ID" value="BAB70753.1"/>
    <property type="status" value="ALT_INIT"/>
    <property type="molecule type" value="mRNA"/>
</dbReference>
<dbReference type="RefSeq" id="NP_543181.2">
    <property type="nucleotide sequence ID" value="NM_080905.2"/>
</dbReference>
<dbReference type="RefSeq" id="XP_008770567.1">
    <property type="nucleotide sequence ID" value="XM_008772345.4"/>
</dbReference>
<dbReference type="RefSeq" id="XP_038953365.1">
    <property type="nucleotide sequence ID" value="XM_039097437.2"/>
</dbReference>
<dbReference type="SMR" id="Q920M9"/>
<dbReference type="BioGRID" id="250875">
    <property type="interactions" value="8"/>
</dbReference>
<dbReference type="DIP" id="DIP-35686N"/>
<dbReference type="FunCoup" id="Q920M9">
    <property type="interactions" value="3633"/>
</dbReference>
<dbReference type="IntAct" id="Q920M9">
    <property type="interactions" value="4"/>
</dbReference>
<dbReference type="MINT" id="Q920M9"/>
<dbReference type="STRING" id="10116.ENSRNOP00000020329"/>
<dbReference type="PhosphoSitePlus" id="Q920M9"/>
<dbReference type="PaxDb" id="10116-ENSRNOP00000020329"/>
<dbReference type="Ensembl" id="ENSRNOT00000020329.7">
    <property type="protein sequence ID" value="ENSRNOP00000020329.5"/>
    <property type="gene ID" value="ENSRNOG00000015143.7"/>
</dbReference>
<dbReference type="Ensembl" id="ENSRNOT00000097354.1">
    <property type="protein sequence ID" value="ENSRNOP00000092754.1"/>
    <property type="gene ID" value="ENSRNOG00000015143.7"/>
</dbReference>
<dbReference type="Ensembl" id="ENSRNOT00000111812.1">
    <property type="protein sequence ID" value="ENSRNOP00000089183.1"/>
    <property type="gene ID" value="ENSRNOG00000015143.7"/>
</dbReference>
<dbReference type="Ensembl" id="ENSRNOT00000112896.1">
    <property type="protein sequence ID" value="ENSRNOP00000092688.1"/>
    <property type="gene ID" value="ENSRNOG00000015143.7"/>
</dbReference>
<dbReference type="Ensembl" id="ENSRNOT00000117078.1">
    <property type="protein sequence ID" value="ENSRNOP00000088384.1"/>
    <property type="gene ID" value="ENSRNOG00000015143.7"/>
</dbReference>
<dbReference type="GeneID" id="140941"/>
<dbReference type="KEGG" id="rno:140941"/>
<dbReference type="AGR" id="RGD:620449"/>
<dbReference type="CTD" id="6477"/>
<dbReference type="RGD" id="620449">
    <property type="gene designation" value="Siah1"/>
</dbReference>
<dbReference type="eggNOG" id="KOG3002">
    <property type="taxonomic scope" value="Eukaryota"/>
</dbReference>
<dbReference type="GeneTree" id="ENSGT00940000154837"/>
<dbReference type="HOGENOM" id="CLU_028215_0_0_1"/>
<dbReference type="InParanoid" id="Q920M9"/>
<dbReference type="PhylomeDB" id="Q920M9"/>
<dbReference type="TreeFam" id="TF312976"/>
<dbReference type="Reactome" id="R-RNO-983168">
    <property type="pathway name" value="Antigen processing: Ubiquitination &amp; Proteasome degradation"/>
</dbReference>
<dbReference type="UniPathway" id="UPA00143"/>
<dbReference type="PRO" id="PR:Q920M9"/>
<dbReference type="Proteomes" id="UP000002494">
    <property type="component" value="Chromosome 19"/>
</dbReference>
<dbReference type="Bgee" id="ENSRNOG00000015143">
    <property type="expression patterns" value="Expressed in cerebellum and 20 other cell types or tissues"/>
</dbReference>
<dbReference type="ExpressionAtlas" id="Q920M9">
    <property type="expression patterns" value="baseline and differential"/>
</dbReference>
<dbReference type="GO" id="GO:0030877">
    <property type="term" value="C:beta-catenin destruction complex"/>
    <property type="evidence" value="ECO:0000250"/>
    <property type="project" value="UniProtKB"/>
</dbReference>
<dbReference type="GO" id="GO:0005737">
    <property type="term" value="C:cytoplasm"/>
    <property type="evidence" value="ECO:0000318"/>
    <property type="project" value="GO_Central"/>
</dbReference>
<dbReference type="GO" id="GO:0005829">
    <property type="term" value="C:cytosol"/>
    <property type="evidence" value="ECO:0000314"/>
    <property type="project" value="UniProtKB"/>
</dbReference>
<dbReference type="GO" id="GO:0005769">
    <property type="term" value="C:early endosome"/>
    <property type="evidence" value="ECO:0000314"/>
    <property type="project" value="RGD"/>
</dbReference>
<dbReference type="GO" id="GO:0005634">
    <property type="term" value="C:nucleus"/>
    <property type="evidence" value="ECO:0000314"/>
    <property type="project" value="UniProtKB"/>
</dbReference>
<dbReference type="GO" id="GO:0019005">
    <property type="term" value="C:SCF ubiquitin ligase complex"/>
    <property type="evidence" value="ECO:0000266"/>
    <property type="project" value="RGD"/>
</dbReference>
<dbReference type="GO" id="GO:0097718">
    <property type="term" value="F:disordered domain specific binding"/>
    <property type="evidence" value="ECO:0000266"/>
    <property type="project" value="RGD"/>
</dbReference>
<dbReference type="GO" id="GO:0042802">
    <property type="term" value="F:identical protein binding"/>
    <property type="evidence" value="ECO:0000266"/>
    <property type="project" value="RGD"/>
</dbReference>
<dbReference type="GO" id="GO:0042803">
    <property type="term" value="F:protein homodimerization activity"/>
    <property type="evidence" value="ECO:0000266"/>
    <property type="project" value="RGD"/>
</dbReference>
<dbReference type="GO" id="GO:0031624">
    <property type="term" value="F:ubiquitin conjugating enzyme binding"/>
    <property type="evidence" value="ECO:0000318"/>
    <property type="project" value="GO_Central"/>
</dbReference>
<dbReference type="GO" id="GO:0061630">
    <property type="term" value="F:ubiquitin protein ligase activity"/>
    <property type="evidence" value="ECO:0000266"/>
    <property type="project" value="RGD"/>
</dbReference>
<dbReference type="GO" id="GO:0004842">
    <property type="term" value="F:ubiquitin-protein transferase activity"/>
    <property type="evidence" value="ECO:0000314"/>
    <property type="project" value="RGD"/>
</dbReference>
<dbReference type="GO" id="GO:0008270">
    <property type="term" value="F:zinc ion binding"/>
    <property type="evidence" value="ECO:0000250"/>
    <property type="project" value="UniProtKB"/>
</dbReference>
<dbReference type="GO" id="GO:0060070">
    <property type="term" value="P:canonical Wnt signaling pathway"/>
    <property type="evidence" value="ECO:0000266"/>
    <property type="project" value="RGD"/>
</dbReference>
<dbReference type="GO" id="GO:0030154">
    <property type="term" value="P:cell differentiation"/>
    <property type="evidence" value="ECO:0007669"/>
    <property type="project" value="UniProtKB-KW"/>
</dbReference>
<dbReference type="GO" id="GO:0007141">
    <property type="term" value="P:male meiosis I"/>
    <property type="evidence" value="ECO:0000266"/>
    <property type="project" value="RGD"/>
</dbReference>
<dbReference type="GO" id="GO:0051402">
    <property type="term" value="P:neuron apoptotic process"/>
    <property type="evidence" value="ECO:0000315"/>
    <property type="project" value="UniProtKB"/>
</dbReference>
<dbReference type="GO" id="GO:0043065">
    <property type="term" value="P:positive regulation of apoptotic process"/>
    <property type="evidence" value="ECO:0000266"/>
    <property type="project" value="RGD"/>
</dbReference>
<dbReference type="GO" id="GO:2001244">
    <property type="term" value="P:positive regulation of intrinsic apoptotic signaling pathway"/>
    <property type="evidence" value="ECO:0000266"/>
    <property type="project" value="RGD"/>
</dbReference>
<dbReference type="GO" id="GO:0009791">
    <property type="term" value="P:post-embryonic development"/>
    <property type="evidence" value="ECO:0000266"/>
    <property type="project" value="RGD"/>
</dbReference>
<dbReference type="GO" id="GO:0043161">
    <property type="term" value="P:proteasome-mediated ubiquitin-dependent protein catabolic process"/>
    <property type="evidence" value="ECO:0000250"/>
    <property type="project" value="UniProtKB"/>
</dbReference>
<dbReference type="GO" id="GO:0030163">
    <property type="term" value="P:protein catabolic process"/>
    <property type="evidence" value="ECO:0000266"/>
    <property type="project" value="RGD"/>
</dbReference>
<dbReference type="GO" id="GO:0031648">
    <property type="term" value="P:protein destabilization"/>
    <property type="evidence" value="ECO:0000315"/>
    <property type="project" value="RGD"/>
</dbReference>
<dbReference type="GO" id="GO:0016567">
    <property type="term" value="P:protein ubiquitination"/>
    <property type="evidence" value="ECO:0007669"/>
    <property type="project" value="UniProtKB-UniPathway"/>
</dbReference>
<dbReference type="GO" id="GO:0040014">
    <property type="term" value="P:regulation of multicellular organism growth"/>
    <property type="evidence" value="ECO:0000266"/>
    <property type="project" value="RGD"/>
</dbReference>
<dbReference type="GO" id="GO:0007283">
    <property type="term" value="P:spermatogenesis"/>
    <property type="evidence" value="ECO:0000266"/>
    <property type="project" value="RGD"/>
</dbReference>
<dbReference type="GO" id="GO:0006511">
    <property type="term" value="P:ubiquitin-dependent protein catabolic process"/>
    <property type="evidence" value="ECO:0000314"/>
    <property type="project" value="UniProtKB"/>
</dbReference>
<dbReference type="CDD" id="cd03829">
    <property type="entry name" value="Sina"/>
    <property type="match status" value="1"/>
</dbReference>
<dbReference type="FunFam" id="2.60.210.10:FF:000002">
    <property type="entry name" value="E3 ubiquitin-protein ligase"/>
    <property type="match status" value="1"/>
</dbReference>
<dbReference type="FunFam" id="3.30.160.60:FF:000665">
    <property type="entry name" value="E3 ubiquitin-protein ligase"/>
    <property type="match status" value="1"/>
</dbReference>
<dbReference type="FunFam" id="3.30.40.10:FF:000050">
    <property type="entry name" value="E3 ubiquitin-protein ligase"/>
    <property type="match status" value="1"/>
</dbReference>
<dbReference type="FunFam" id="3.30.40.10:FF:000063">
    <property type="entry name" value="E3 ubiquitin-protein ligase"/>
    <property type="match status" value="1"/>
</dbReference>
<dbReference type="Gene3D" id="2.60.210.10">
    <property type="entry name" value="Apoptosis, Tumor Necrosis Factor Receptor Associated Protein 2, Chain A"/>
    <property type="match status" value="1"/>
</dbReference>
<dbReference type="Gene3D" id="3.30.40.10">
    <property type="entry name" value="Zinc/RING finger domain, C3HC4 (zinc finger)"/>
    <property type="match status" value="2"/>
</dbReference>
<dbReference type="InterPro" id="IPR018121">
    <property type="entry name" value="7-in-absentia-prot_TRAF-dom"/>
</dbReference>
<dbReference type="InterPro" id="IPR004162">
    <property type="entry name" value="SINA-like_animal"/>
</dbReference>
<dbReference type="InterPro" id="IPR049548">
    <property type="entry name" value="Sina-like_RING"/>
</dbReference>
<dbReference type="InterPro" id="IPR008974">
    <property type="entry name" value="TRAF-like"/>
</dbReference>
<dbReference type="InterPro" id="IPR001841">
    <property type="entry name" value="Znf_RING"/>
</dbReference>
<dbReference type="InterPro" id="IPR013083">
    <property type="entry name" value="Znf_RING/FYVE/PHD"/>
</dbReference>
<dbReference type="InterPro" id="IPR013010">
    <property type="entry name" value="Znf_SIAH"/>
</dbReference>
<dbReference type="PANTHER" id="PTHR45877:SF7">
    <property type="entry name" value="E3 UBIQUITIN-PROTEIN LIGASE SIAH1"/>
    <property type="match status" value="1"/>
</dbReference>
<dbReference type="PANTHER" id="PTHR45877">
    <property type="entry name" value="E3 UBIQUITIN-PROTEIN LIGASE SIAH2"/>
    <property type="match status" value="1"/>
</dbReference>
<dbReference type="Pfam" id="PF21362">
    <property type="entry name" value="Sina_RING"/>
    <property type="match status" value="1"/>
</dbReference>
<dbReference type="Pfam" id="PF03145">
    <property type="entry name" value="Sina_TRAF"/>
    <property type="match status" value="1"/>
</dbReference>
<dbReference type="Pfam" id="PF21361">
    <property type="entry name" value="Sina_ZnF"/>
    <property type="match status" value="1"/>
</dbReference>
<dbReference type="SUPFAM" id="SSF57850">
    <property type="entry name" value="RING/U-box"/>
    <property type="match status" value="1"/>
</dbReference>
<dbReference type="SUPFAM" id="SSF49599">
    <property type="entry name" value="TRAF domain-like"/>
    <property type="match status" value="1"/>
</dbReference>
<dbReference type="PROSITE" id="PS50089">
    <property type="entry name" value="ZF_RING_2"/>
    <property type="match status" value="1"/>
</dbReference>
<dbReference type="PROSITE" id="PS51081">
    <property type="entry name" value="ZF_SIAH"/>
    <property type="match status" value="1"/>
</dbReference>
<protein>
    <recommendedName>
        <fullName>E3 ubiquitin-protein ligase SIAH1</fullName>
        <ecNumber evidence="8 10">2.3.2.27</ecNumber>
    </recommendedName>
    <alternativeName>
        <fullName evidence="13">RING-type E3 ubiquitin transferase SIAH1</fullName>
    </alternativeName>
    <alternativeName>
        <fullName>Seven in absentia homolog 1</fullName>
        <shortName>Siah-1</shortName>
    </alternativeName>
    <alternativeName>
        <fullName>Siah-1a</fullName>
    </alternativeName>
</protein>
<name>SIAH1_RAT</name>
<keyword id="KW-0053">Apoptosis</keyword>
<keyword id="KW-0131">Cell cycle</keyword>
<keyword id="KW-0963">Cytoplasm</keyword>
<keyword id="KW-0217">Developmental protein</keyword>
<keyword id="KW-0221">Differentiation</keyword>
<keyword id="KW-0479">Metal-binding</keyword>
<keyword id="KW-0539">Nucleus</keyword>
<keyword id="KW-0597">Phosphoprotein</keyword>
<keyword id="KW-1185">Reference proteome</keyword>
<keyword id="KW-0744">Spermatogenesis</keyword>
<keyword id="KW-0808">Transferase</keyword>
<keyword id="KW-0833">Ubl conjugation pathway</keyword>
<keyword id="KW-0862">Zinc</keyword>
<keyword id="KW-0863">Zinc-finger</keyword>
<accession>Q920M9</accession>
<accession>Q06984</accession>
<comment type="function">
    <text evidence="2 3 8 10">E3 ubiquitin-protein ligase that mediates ubiquitination and subsequent proteasomal degradation of target proteins (PubMed:11786535, PubMed:15951807). E3 ubiquitin ligases accept ubiquitin from an E2 ubiquitin-conjugating enzyme in the form of a thioester and then directly transfers the ubiquitin to targeted substrates (PubMed:11786535, PubMed:15951807). Mediates E3 ubiquitin ligase activity either through direct binding to substrates or by functioning as the essential RING domain subunit of larger E3 complexes (PubMed:11786535, PubMed:15951807). Triggers the ubiquitin-mediated degradation of many substrates, including proteins involved in transcription regulation (ELL2, MYB, POU2AF1, PML and RBBP8), a cell surface receptor (DCC), cytoplasmic signal transduction molecules (KLF10/TIEG1 and NUMB), an antiapoptotic protein (BAG1), a microtubule motor protein (KIF22), a protein involved in synaptic vesicle function in neurons (SYP), a structural protein (CTNNB1) and SNCAIP (PubMed:11786535). Confers constitutive instability to HIPK2 through proteasomal degradation (By similarity). It is thereby involved in many cellular processes such as apoptosis, tumor suppression, cell cycle, axon guidance, transcription, spermatogenesis and TNF-alpha signaling (By similarity). Has some overlapping function with SIAH2 (By similarity). Induces apoptosis in cooperation with PEG3 (By similarity). Upon nitric oxid (NO) generation that follows apoptotic stimulation, interacts with S-nitrosylated GAPDH, mediating the translocation of GAPDH to the nucleus (PubMed:15951807). GAPDH acts as a stabilizer of SIAH1, facilitating the degradation of nuclear proteins (PubMed:15951807). Mediates ubiquitination and degradation of EGLN2 and EGLN3 in response to the unfolded protein response (UPR), leading to their degradation and subsequent stabilization of ATF4 (By similarity). Also part of the Wnt signaling pathway in which it mediates the Wnt-induced ubiquitin-mediated proteasomal degradation of AXIN1.</text>
</comment>
<comment type="catalytic activity">
    <reaction evidence="8 10">
        <text>S-ubiquitinyl-[E2 ubiquitin-conjugating enzyme]-L-cysteine + [acceptor protein]-L-lysine = [E2 ubiquitin-conjugating enzyme]-L-cysteine + N(6)-ubiquitinyl-[acceptor protein]-L-lysine.</text>
        <dbReference type="EC" id="2.3.2.27"/>
    </reaction>
</comment>
<comment type="pathway">
    <text evidence="8 10">Protein modification; protein ubiquitination.</text>
</comment>
<comment type="subunit">
    <text evidence="2 3 7 8 9 10 11 12">Homodimer. Component of some large E3 complex composed of UBE2D1, SIAH1, CACYBP/SIP, SKP1, APC and TBL1X. Interacts with UBE2I. Interacts with alpha-tubulin. Interacts with PEG10, which may inhibit its activity. Interacts with PEG3 and HIPK2 (By similarity). Interacts with group 1 glutamate receptors GRM1 and GRM5. Interacts with DAB1, which may inhibit its activity. Interacts with UBE2E2. Interacts with SNCAIP. Interacts with HIPK2; the interaction is promoted by DAZAP2 and results in SIAH1-mediated ubiquitination and subsequent proteasomal degradation of HIPK2 (By similarity). Interacts with DAZAP2; the interaction is decreased following phosphorylation of DAZAP2 by HIPK2 (By similarity). Interacts with GAPDH; leading to stabilize SIAH1. Interacts with Bassoon/BSN and Piccolo/PLCO; these interactions negatively regulate SIAH1 E3 ligase activity. Interacts with DCC (By similarity). Interacts with AXIN1; catalyzes AXIN1 ubiquitination and subsequent proteasome-mediated ubiquitin-dependent degradation.</text>
</comment>
<comment type="interaction">
    <interactant intactId="EBI-957514">
        <id>Q920M9</id>
    </interactant>
    <interactant intactId="EBI-2271660">
        <id>O88778</id>
        <label>Bsn</label>
    </interactant>
    <organismsDiffer>false</organismsDiffer>
    <experiments>3</experiments>
</comment>
<comment type="interaction">
    <interactant intactId="EBI-957514">
        <id>Q920M9</id>
    </interactant>
    <interactant intactId="EBI-2271602">
        <id>Q9JKS6</id>
        <label>Pclo</label>
    </interactant>
    <organismsDiffer>false</organismsDiffer>
    <experiments>2</experiments>
</comment>
<comment type="interaction">
    <interactant intactId="EBI-957514">
        <id>Q920M9</id>
    </interactant>
    <interactant intactId="EBI-957526">
        <id>Q71F54</id>
        <label>Sh3rf1</label>
    </interactant>
    <organismsDiffer>false</organismsDiffer>
    <experiments>2</experiments>
</comment>
<comment type="subcellular location">
    <subcellularLocation>
        <location>Cytoplasm</location>
    </subcellularLocation>
    <subcellularLocation>
        <location>Nucleus</location>
    </subcellularLocation>
    <text>Predominantly cytoplasmic. Partially nuclear.</text>
</comment>
<comment type="domain">
    <text evidence="1">The RING-type zinc finger domain is essential for ubiquitin ligase activity.</text>
</comment>
<comment type="domain">
    <text evidence="2">The SBD domain (substrate-binding domain) mediates the homodimerization and the interaction with substrate proteins. It is related to the TRAF family.</text>
</comment>
<comment type="PTM">
    <text evidence="3">Phosphorylated on Ser-19 by ATM and ATR. This phosphorylation disrupts SIAH1 interaction with HIPK2, and subsequent proteasomal degradation of HIPK2 (By similarity).</text>
</comment>
<comment type="similarity">
    <text evidence="13">Belongs to the SINA (Seven in absentia) family.</text>
</comment>
<comment type="sequence caution" evidence="13">
    <conflict type="erroneous initiation">
        <sequence resource="EMBL-CDS" id="BAB70753"/>
    </conflict>
</comment>